<accession>A1T8M8</accession>
<feature type="chain" id="PRO_0000327093" description="Protoheme IX farnesyltransferase">
    <location>
        <begin position="1"/>
        <end position="313"/>
    </location>
</feature>
<feature type="transmembrane region" description="Helical" evidence="1">
    <location>
        <begin position="34"/>
        <end position="54"/>
    </location>
</feature>
<feature type="transmembrane region" description="Helical" evidence="1">
    <location>
        <begin position="56"/>
        <end position="76"/>
    </location>
</feature>
<feature type="transmembrane region" description="Helical" evidence="1">
    <location>
        <begin position="105"/>
        <end position="125"/>
    </location>
</feature>
<feature type="transmembrane region" description="Helical" evidence="1">
    <location>
        <begin position="128"/>
        <end position="148"/>
    </location>
</feature>
<feature type="transmembrane region" description="Helical" evidence="1">
    <location>
        <begin position="152"/>
        <end position="172"/>
    </location>
</feature>
<feature type="transmembrane region" description="Helical" evidence="1">
    <location>
        <begin position="173"/>
        <end position="193"/>
    </location>
</feature>
<feature type="transmembrane region" description="Helical" evidence="1">
    <location>
        <begin position="243"/>
        <end position="263"/>
    </location>
</feature>
<feature type="transmembrane region" description="Helical" evidence="1">
    <location>
        <begin position="291"/>
        <end position="311"/>
    </location>
</feature>
<name>COXX_MYCVP</name>
<evidence type="ECO:0000255" key="1">
    <source>
        <dbReference type="HAMAP-Rule" id="MF_00154"/>
    </source>
</evidence>
<keyword id="KW-1003">Cell membrane</keyword>
<keyword id="KW-0350">Heme biosynthesis</keyword>
<keyword id="KW-0472">Membrane</keyword>
<keyword id="KW-0808">Transferase</keyword>
<keyword id="KW-0812">Transmembrane</keyword>
<keyword id="KW-1133">Transmembrane helix</keyword>
<gene>
    <name evidence="1" type="primary">ctaB</name>
    <name type="ordered locus">Mvan_2721</name>
</gene>
<dbReference type="EC" id="2.5.1.141" evidence="1"/>
<dbReference type="EMBL" id="CP000511">
    <property type="protein sequence ID" value="ABM13528.1"/>
    <property type="molecule type" value="Genomic_DNA"/>
</dbReference>
<dbReference type="RefSeq" id="WP_011779936.1">
    <property type="nucleotide sequence ID" value="NZ_JACKSD010000115.1"/>
</dbReference>
<dbReference type="SMR" id="A1T8M8"/>
<dbReference type="STRING" id="350058.Mvan_2721"/>
<dbReference type="KEGG" id="mva:Mvan_2721"/>
<dbReference type="eggNOG" id="COG0109">
    <property type="taxonomic scope" value="Bacteria"/>
</dbReference>
<dbReference type="HOGENOM" id="CLU_029631_0_1_11"/>
<dbReference type="UniPathway" id="UPA00834">
    <property type="reaction ID" value="UER00712"/>
</dbReference>
<dbReference type="Proteomes" id="UP000009159">
    <property type="component" value="Chromosome"/>
</dbReference>
<dbReference type="GO" id="GO:0005886">
    <property type="term" value="C:plasma membrane"/>
    <property type="evidence" value="ECO:0007669"/>
    <property type="project" value="UniProtKB-SubCell"/>
</dbReference>
<dbReference type="GO" id="GO:0008495">
    <property type="term" value="F:protoheme IX farnesyltransferase activity"/>
    <property type="evidence" value="ECO:0007669"/>
    <property type="project" value="UniProtKB-UniRule"/>
</dbReference>
<dbReference type="GO" id="GO:0048034">
    <property type="term" value="P:heme O biosynthetic process"/>
    <property type="evidence" value="ECO:0007669"/>
    <property type="project" value="UniProtKB-UniRule"/>
</dbReference>
<dbReference type="CDD" id="cd13957">
    <property type="entry name" value="PT_UbiA_Cox10"/>
    <property type="match status" value="1"/>
</dbReference>
<dbReference type="FunFam" id="1.10.357.140:FF:000001">
    <property type="entry name" value="Protoheme IX farnesyltransferase"/>
    <property type="match status" value="1"/>
</dbReference>
<dbReference type="Gene3D" id="1.10.357.140">
    <property type="entry name" value="UbiA prenyltransferase"/>
    <property type="match status" value="1"/>
</dbReference>
<dbReference type="HAMAP" id="MF_00154">
    <property type="entry name" value="CyoE_CtaB"/>
    <property type="match status" value="1"/>
</dbReference>
<dbReference type="InterPro" id="IPR006369">
    <property type="entry name" value="Protohaem_IX_farnesylTrfase"/>
</dbReference>
<dbReference type="InterPro" id="IPR000537">
    <property type="entry name" value="UbiA_prenyltransferase"/>
</dbReference>
<dbReference type="InterPro" id="IPR044878">
    <property type="entry name" value="UbiA_sf"/>
</dbReference>
<dbReference type="NCBIfam" id="TIGR01473">
    <property type="entry name" value="cyoE_ctaB"/>
    <property type="match status" value="1"/>
</dbReference>
<dbReference type="NCBIfam" id="NF003349">
    <property type="entry name" value="PRK04375.1-2"/>
    <property type="match status" value="1"/>
</dbReference>
<dbReference type="PANTHER" id="PTHR43448:SF7">
    <property type="entry name" value="4-HYDROXYBENZOATE SOLANESYLTRANSFERASE"/>
    <property type="match status" value="1"/>
</dbReference>
<dbReference type="PANTHER" id="PTHR43448">
    <property type="entry name" value="PROTOHEME IX FARNESYLTRANSFERASE, MITOCHONDRIAL"/>
    <property type="match status" value="1"/>
</dbReference>
<dbReference type="Pfam" id="PF01040">
    <property type="entry name" value="UbiA"/>
    <property type="match status" value="1"/>
</dbReference>
<protein>
    <recommendedName>
        <fullName evidence="1">Protoheme IX farnesyltransferase</fullName>
        <ecNumber evidence="1">2.5.1.141</ecNumber>
    </recommendedName>
    <alternativeName>
        <fullName evidence="1">Heme B farnesyltransferase</fullName>
    </alternativeName>
    <alternativeName>
        <fullName evidence="1">Heme O synthase</fullName>
    </alternativeName>
</protein>
<sequence>MRIREGHLVGDVAGGPIRFRDRVLGYIGLTKPRVIELLLVTTIPAMLLADRGTVDPLLILNTLVGGLLAAAGANTLNCVADADIDKKMKRTERRALARATVPRSHALIFGLALSVLSFFWLWWTTNMLSAHLAGATIAFYVLIYTLVLKRRTSQNVVWGGAAGCMPVMIGWSAVTGTIQWPALVMFLIIFFWTPPHTWALAMRYKEDYEAAGVPMLPVVATERQVTKQILIYTWLTVAATLALALATGWLYAAVAIVAGTWFLAMAHQLYAGVRRGEPVKPLRLFLQSNNYLAVVFCALAVDSALALPTLFSV</sequence>
<comment type="function">
    <text evidence="1">Converts heme B (protoheme IX) to heme O by substitution of the vinyl group on carbon 2 of heme B porphyrin ring with a hydroxyethyl farnesyl side group.</text>
</comment>
<comment type="catalytic activity">
    <reaction evidence="1">
        <text>heme b + (2E,6E)-farnesyl diphosphate + H2O = Fe(II)-heme o + diphosphate</text>
        <dbReference type="Rhea" id="RHEA:28070"/>
        <dbReference type="ChEBI" id="CHEBI:15377"/>
        <dbReference type="ChEBI" id="CHEBI:33019"/>
        <dbReference type="ChEBI" id="CHEBI:60344"/>
        <dbReference type="ChEBI" id="CHEBI:60530"/>
        <dbReference type="ChEBI" id="CHEBI:175763"/>
        <dbReference type="EC" id="2.5.1.141"/>
    </reaction>
</comment>
<comment type="pathway">
    <text evidence="1">Porphyrin-containing compound metabolism; heme O biosynthesis; heme O from protoheme: step 1/1.</text>
</comment>
<comment type="subcellular location">
    <subcellularLocation>
        <location evidence="1">Cell membrane</location>
        <topology evidence="1">Multi-pass membrane protein</topology>
    </subcellularLocation>
</comment>
<comment type="miscellaneous">
    <text evidence="1">Carbon 2 of the heme B porphyrin ring is defined according to the Fischer nomenclature.</text>
</comment>
<comment type="similarity">
    <text evidence="1">Belongs to the UbiA prenyltransferase family. Protoheme IX farnesyltransferase subfamily.</text>
</comment>
<proteinExistence type="inferred from homology"/>
<reference key="1">
    <citation type="submission" date="2006-12" db="EMBL/GenBank/DDBJ databases">
        <title>Complete sequence of Mycobacterium vanbaalenii PYR-1.</title>
        <authorList>
            <consortium name="US DOE Joint Genome Institute"/>
            <person name="Copeland A."/>
            <person name="Lucas S."/>
            <person name="Lapidus A."/>
            <person name="Barry K."/>
            <person name="Detter J.C."/>
            <person name="Glavina del Rio T."/>
            <person name="Hammon N."/>
            <person name="Israni S."/>
            <person name="Dalin E."/>
            <person name="Tice H."/>
            <person name="Pitluck S."/>
            <person name="Singan V."/>
            <person name="Schmutz J."/>
            <person name="Larimer F."/>
            <person name="Land M."/>
            <person name="Hauser L."/>
            <person name="Kyrpides N."/>
            <person name="Anderson I.J."/>
            <person name="Miller C."/>
            <person name="Richardson P."/>
        </authorList>
    </citation>
    <scope>NUCLEOTIDE SEQUENCE [LARGE SCALE GENOMIC DNA]</scope>
    <source>
        <strain>DSM 7251 / JCM 13017 / BCRC 16820 / KCTC 9966 / NRRL B-24157 / PYR-1</strain>
    </source>
</reference>
<organism>
    <name type="scientific">Mycolicibacterium vanbaalenii (strain DSM 7251 / JCM 13017 / BCRC 16820 / KCTC 9966 / NRRL B-24157 / PYR-1)</name>
    <name type="common">Mycobacterium vanbaalenii</name>
    <dbReference type="NCBI Taxonomy" id="350058"/>
    <lineage>
        <taxon>Bacteria</taxon>
        <taxon>Bacillati</taxon>
        <taxon>Actinomycetota</taxon>
        <taxon>Actinomycetes</taxon>
        <taxon>Mycobacteriales</taxon>
        <taxon>Mycobacteriaceae</taxon>
        <taxon>Mycolicibacterium</taxon>
    </lineage>
</organism>